<name>DAO_MYCTA</name>
<evidence type="ECO:0000250" key="1">
    <source>
        <dbReference type="UniProtKB" id="P00371"/>
    </source>
</evidence>
<evidence type="ECO:0000250" key="2">
    <source>
        <dbReference type="UniProtKB" id="P14920"/>
    </source>
</evidence>
<evidence type="ECO:0000250" key="3">
    <source>
        <dbReference type="UniProtKB" id="Q1AYM8"/>
    </source>
</evidence>
<evidence type="ECO:0000255" key="4">
    <source>
        <dbReference type="PIRSR" id="PIRSR000189-1"/>
    </source>
</evidence>
<evidence type="ECO:0000269" key="5">
    <source>
    </source>
</evidence>
<evidence type="ECO:0000269" key="6">
    <source>
    </source>
</evidence>
<evidence type="ECO:0000303" key="7">
    <source>
    </source>
</evidence>
<evidence type="ECO:0000305" key="8"/>
<evidence type="ECO:0000312" key="9">
    <source>
        <dbReference type="EMBL" id="ABQ73674.1"/>
    </source>
</evidence>
<evidence type="ECO:0000312" key="10">
    <source>
        <dbReference type="Proteomes" id="UP000001988"/>
    </source>
</evidence>
<feature type="chain" id="PRO_0000460380" description="D-amino-acid oxidase">
    <location>
        <begin position="1"/>
        <end position="320"/>
    </location>
</feature>
<feature type="binding site" evidence="2">
    <location>
        <position position="13"/>
    </location>
    <ligand>
        <name>FAD</name>
        <dbReference type="ChEBI" id="CHEBI:57692"/>
    </ligand>
</feature>
<feature type="binding site" evidence="2">
    <location>
        <position position="14"/>
    </location>
    <ligand>
        <name>FAD</name>
        <dbReference type="ChEBI" id="CHEBI:57692"/>
    </ligand>
</feature>
<feature type="binding site" evidence="2">
    <location>
        <position position="15"/>
    </location>
    <ligand>
        <name>FAD</name>
        <dbReference type="ChEBI" id="CHEBI:57692"/>
    </ligand>
</feature>
<feature type="binding site" evidence="2">
    <location>
        <position position="42"/>
    </location>
    <ligand>
        <name>FAD</name>
        <dbReference type="ChEBI" id="CHEBI:57692"/>
    </ligand>
</feature>
<feature type="binding site" evidence="2">
    <location>
        <position position="43"/>
    </location>
    <ligand>
        <name>FAD</name>
        <dbReference type="ChEBI" id="CHEBI:57692"/>
    </ligand>
</feature>
<feature type="binding site" evidence="2">
    <location>
        <position position="44"/>
    </location>
    <ligand>
        <name>FAD</name>
        <dbReference type="ChEBI" id="CHEBI:57692"/>
    </ligand>
</feature>
<feature type="binding site" evidence="1">
    <location>
        <position position="48"/>
    </location>
    <ligand>
        <name>FAD</name>
        <dbReference type="ChEBI" id="CHEBI:57692"/>
    </ligand>
</feature>
<feature type="binding site" evidence="2">
    <location>
        <position position="49"/>
    </location>
    <ligand>
        <name>FAD</name>
        <dbReference type="ChEBI" id="CHEBI:57692"/>
    </ligand>
</feature>
<feature type="binding site" evidence="1">
    <location>
        <position position="220"/>
    </location>
    <ligand>
        <name>D-proline</name>
        <dbReference type="ChEBI" id="CHEBI:57726"/>
    </ligand>
</feature>
<feature type="binding site" evidence="2">
    <location>
        <position position="220"/>
    </location>
    <ligand>
        <name>D-serine</name>
        <dbReference type="ChEBI" id="CHEBI:35247"/>
    </ligand>
</feature>
<feature type="binding site" evidence="1">
    <location>
        <position position="274"/>
    </location>
    <ligand>
        <name>D-proline</name>
        <dbReference type="ChEBI" id="CHEBI:57726"/>
    </ligand>
</feature>
<feature type="binding site" evidence="2">
    <location>
        <position position="274"/>
    </location>
    <ligand>
        <name>D-serine</name>
        <dbReference type="ChEBI" id="CHEBI:35247"/>
    </ligand>
</feature>
<feature type="binding site" evidence="2">
    <location>
        <position position="274"/>
    </location>
    <ligand>
        <name>FAD</name>
        <dbReference type="ChEBI" id="CHEBI:57692"/>
    </ligand>
</feature>
<feature type="binding site" evidence="2">
    <location>
        <position position="299"/>
    </location>
    <ligand>
        <name>FAD</name>
        <dbReference type="ChEBI" id="CHEBI:57692"/>
    </ligand>
</feature>
<feature type="binding site" evidence="1">
    <location>
        <position position="300"/>
    </location>
    <ligand>
        <name>D-proline</name>
        <dbReference type="ChEBI" id="CHEBI:57726"/>
    </ligand>
</feature>
<feature type="binding site" evidence="2">
    <location>
        <position position="300"/>
    </location>
    <ligand>
        <name>D-serine</name>
        <dbReference type="ChEBI" id="CHEBI:35247"/>
    </ligand>
</feature>
<feature type="binding site" evidence="2">
    <location>
        <position position="300"/>
    </location>
    <ligand>
        <name>FAD</name>
        <dbReference type="ChEBI" id="CHEBI:57692"/>
    </ligand>
</feature>
<feature type="binding site" evidence="2">
    <location>
        <position position="302"/>
    </location>
    <ligand>
        <name>FAD</name>
        <dbReference type="ChEBI" id="CHEBI:57692"/>
    </ligand>
</feature>
<feature type="binding site" evidence="2">
    <location>
        <position position="304"/>
    </location>
    <ligand>
        <name>FAD</name>
        <dbReference type="ChEBI" id="CHEBI:57692"/>
    </ligand>
</feature>
<protein>
    <recommendedName>
        <fullName evidence="7">D-amino-acid oxidase</fullName>
        <shortName evidence="8">DAAO</shortName>
        <shortName evidence="8">DAMOX</shortName>
        <shortName evidence="7">DAO</shortName>
        <ecNumber evidence="3">1.4.3.3</ecNumber>
    </recommendedName>
</protein>
<reference evidence="10" key="1">
    <citation type="journal article" date="2008" name="PLoS ONE">
        <title>Genetic basis of virulence attenuation revealed by comparative genomic analysis of Mycobacterium tuberculosis strain H37Ra versus H37Rv.</title>
        <authorList>
            <person name="Zheng H."/>
            <person name="Lu L."/>
            <person name="Wang B."/>
            <person name="Pu S."/>
            <person name="Zhang X."/>
            <person name="Zhu G."/>
            <person name="Shi W."/>
            <person name="Zhang L."/>
            <person name="Wang H."/>
            <person name="Wang S."/>
            <person name="Zhao G."/>
            <person name="Zhang Y."/>
        </authorList>
    </citation>
    <scope>NUCLEOTIDE SEQUENCE [LARGE SCALE GENOMIC DNA]</scope>
    <source>
        <strain evidence="10">ATCC 25177 / H37Ra</strain>
    </source>
</reference>
<reference evidence="8" key="2">
    <citation type="journal article" date="2015" name="Sci. Rep.">
        <title>The Mycobacterium tuberculosis H37Ra gene MRA_1916 causes growth defects upon down-regulation.</title>
        <authorList>
            <person name="Singh K.S."/>
            <person name="Singh S.K."/>
        </authorList>
    </citation>
    <scope>FUNCTION</scope>
    <scope>SUBCELLULAR LOCATION</scope>
    <scope>INDUCTION</scope>
    <scope>DISRUPTION PHENOTYPE</scope>
</reference>
<reference evidence="8" key="3">
    <citation type="journal article" date="2021" name="Tuberculosis">
        <title>Knockout of MRA_1916 in Mycobacterium tuberculosis H37Ra affects its growth, biofilm formation, survival in macrophages and in mice.</title>
        <authorList>
            <person name="Singh K.S."/>
            <person name="Kumar R."/>
            <person name="Chauhan A."/>
            <person name="Singh N."/>
            <person name="Sharma R."/>
            <person name="Singh D."/>
            <person name="Singh S.K."/>
        </authorList>
    </citation>
    <scope>DISRUPTION PHENOTYPE</scope>
</reference>
<proteinExistence type="evidence at transcript level"/>
<comment type="function">
    <text evidence="3 5">Catalyzes the oxidative deamination of D-amino acids with broad substrate specificity (By similarity). Enables the organism to utilize D-amino acids as a source of nutrients (PubMed:26531045). Enables the organism to utilize glycine as a carbon source (PubMed:26531045).</text>
</comment>
<comment type="catalytic activity">
    <reaction evidence="3">
        <text>a D-alpha-amino acid + O2 + H2O = a 2-oxocarboxylate + H2O2 + NH4(+)</text>
        <dbReference type="Rhea" id="RHEA:21816"/>
        <dbReference type="ChEBI" id="CHEBI:15377"/>
        <dbReference type="ChEBI" id="CHEBI:15379"/>
        <dbReference type="ChEBI" id="CHEBI:16240"/>
        <dbReference type="ChEBI" id="CHEBI:28938"/>
        <dbReference type="ChEBI" id="CHEBI:35179"/>
        <dbReference type="ChEBI" id="CHEBI:59871"/>
        <dbReference type="EC" id="1.4.3.3"/>
    </reaction>
    <physiologicalReaction direction="left-to-right" evidence="3">
        <dbReference type="Rhea" id="RHEA:21817"/>
    </physiologicalReaction>
</comment>
<comment type="cofactor">
    <cofactor evidence="4">
        <name>FAD</name>
        <dbReference type="ChEBI" id="CHEBI:57692"/>
    </cofactor>
</comment>
<comment type="subcellular location">
    <subcellularLocation>
        <location evidence="5">Cytoplasm</location>
    </subcellularLocation>
    <subcellularLocation>
        <location evidence="5">Secreted</location>
        <location evidence="5">Cell wall</location>
    </subcellularLocation>
    <text evidence="5">Predominantly cytoplasmic.</text>
</comment>
<comment type="induction">
    <text evidence="5">Repressed in hypoxic conditions.</text>
</comment>
<comment type="disruption phenotype">
    <text evidence="5 6">Increases the permeability of the cell wall and decreases biofilm formation (PubMed:33812176). Decreases cell population growth when grown on the carbon sources glycerol, glycine, glyoxylate, or L-serine (PubMed:33812176). Reduces survival in macrophages and in a mouse model of infection (PubMed:33812176). Knockdown of the enzyme leads to a decreased cell population growth on glycine or serine carbon sources (PubMed:26531045). Cell population growth is normal when grown on acetate carbon source (PubMed:33812176).</text>
</comment>
<comment type="similarity">
    <text evidence="8">Belongs to the DAMOX/DASOX family.</text>
</comment>
<gene>
    <name evidence="7" type="primary">dao</name>
    <name evidence="9" type="ordered locus">MRA_1916</name>
</gene>
<organism evidence="10">
    <name type="scientific">Mycobacterium tuberculosis (strain ATCC 25177 / H37Ra)</name>
    <dbReference type="NCBI Taxonomy" id="419947"/>
    <lineage>
        <taxon>Bacteria</taxon>
        <taxon>Bacillati</taxon>
        <taxon>Actinomycetota</taxon>
        <taxon>Actinomycetes</taxon>
        <taxon>Mycobacteriales</taxon>
        <taxon>Mycobacteriaceae</taxon>
        <taxon>Mycobacterium</taxon>
        <taxon>Mycobacterium tuberculosis complex</taxon>
    </lineage>
</organism>
<dbReference type="EC" id="1.4.3.3" evidence="3"/>
<dbReference type="EMBL" id="CP000611">
    <property type="protein sequence ID" value="ABQ73674.1"/>
    <property type="molecule type" value="Genomic_DNA"/>
</dbReference>
<dbReference type="RefSeq" id="WP_003899072.1">
    <property type="nucleotide sequence ID" value="NZ_CP016972.1"/>
</dbReference>
<dbReference type="SMR" id="A5U3S4"/>
<dbReference type="KEGG" id="mra:MRA_1916"/>
<dbReference type="eggNOG" id="COG0665">
    <property type="taxonomic scope" value="Bacteria"/>
</dbReference>
<dbReference type="HOGENOM" id="CLU_034311_0_0_11"/>
<dbReference type="Proteomes" id="UP000001988">
    <property type="component" value="Chromosome"/>
</dbReference>
<dbReference type="GO" id="GO:0005737">
    <property type="term" value="C:cytoplasm"/>
    <property type="evidence" value="ECO:0000314"/>
    <property type="project" value="UniProtKB"/>
</dbReference>
<dbReference type="GO" id="GO:0005576">
    <property type="term" value="C:extracellular region"/>
    <property type="evidence" value="ECO:0007669"/>
    <property type="project" value="UniProtKB-KW"/>
</dbReference>
<dbReference type="GO" id="GO:0009274">
    <property type="term" value="C:peptidoglycan-based cell wall"/>
    <property type="evidence" value="ECO:0000314"/>
    <property type="project" value="UniProtKB"/>
</dbReference>
<dbReference type="GO" id="GO:0003884">
    <property type="term" value="F:D-amino-acid oxidase activity"/>
    <property type="evidence" value="ECO:0007669"/>
    <property type="project" value="InterPro"/>
</dbReference>
<dbReference type="GO" id="GO:0071949">
    <property type="term" value="F:FAD binding"/>
    <property type="evidence" value="ECO:0007669"/>
    <property type="project" value="InterPro"/>
</dbReference>
<dbReference type="GO" id="GO:0009060">
    <property type="term" value="P:aerobic respiration"/>
    <property type="evidence" value="ECO:0000315"/>
    <property type="project" value="UniProtKB"/>
</dbReference>
<dbReference type="GO" id="GO:0019478">
    <property type="term" value="P:D-amino acid catabolic process"/>
    <property type="evidence" value="ECO:0007669"/>
    <property type="project" value="TreeGrafter"/>
</dbReference>
<dbReference type="GO" id="GO:0006546">
    <property type="term" value="P:glycine catabolic process"/>
    <property type="evidence" value="ECO:0000315"/>
    <property type="project" value="UniProtKB"/>
</dbReference>
<dbReference type="Gene3D" id="3.30.9.10">
    <property type="entry name" value="D-Amino Acid Oxidase, subunit A, domain 2"/>
    <property type="match status" value="1"/>
</dbReference>
<dbReference type="Gene3D" id="3.40.50.720">
    <property type="entry name" value="NAD(P)-binding Rossmann-like Domain"/>
    <property type="match status" value="1"/>
</dbReference>
<dbReference type="InterPro" id="IPR023209">
    <property type="entry name" value="DAO"/>
</dbReference>
<dbReference type="InterPro" id="IPR006076">
    <property type="entry name" value="FAD-dep_OxRdtase"/>
</dbReference>
<dbReference type="PANTHER" id="PTHR11530">
    <property type="entry name" value="D-AMINO ACID OXIDASE"/>
    <property type="match status" value="1"/>
</dbReference>
<dbReference type="PANTHER" id="PTHR11530:SF11">
    <property type="entry name" value="D-ASPARTATE OXIDASE"/>
    <property type="match status" value="1"/>
</dbReference>
<dbReference type="Pfam" id="PF01266">
    <property type="entry name" value="DAO"/>
    <property type="match status" value="1"/>
</dbReference>
<dbReference type="PIRSF" id="PIRSF000189">
    <property type="entry name" value="D-aa_oxidase"/>
    <property type="match status" value="1"/>
</dbReference>
<dbReference type="SUPFAM" id="SSF54373">
    <property type="entry name" value="FAD-linked reductases, C-terminal domain"/>
    <property type="match status" value="1"/>
</dbReference>
<dbReference type="SUPFAM" id="SSF51971">
    <property type="entry name" value="Nucleotide-binding domain"/>
    <property type="match status" value="1"/>
</dbReference>
<sequence>MAIGEQQVIVIGAGVSGLTSAICLAEAGWPVRVWAAALPQQTTSAVAGAVWGPRPKEPVAKVRGWIEQSLHVFRDLAKDPATGVRMTPALSVGDRIETGAMPPGLELIPDVRPADPADVPGGFRAGFHATLPMIDMPQYLDCLTQRLAATGCEIETRPLRSLAEAAEAAPIVINCAGLGARELAGDATVWPRFGQHVVLTNPGLEQLFIERTGGSEWICYFAHPQRVVCGGISIPGRWDPTPEPEITERILQRCRRIQPRLAEAAVIETITGLRPDRPSVRVEAEPIGRALCIHNYGHGGDGVTLSWGCAREVVNLVGGG</sequence>
<keyword id="KW-0134">Cell wall</keyword>
<keyword id="KW-0963">Cytoplasm</keyword>
<keyword id="KW-0274">FAD</keyword>
<keyword id="KW-0285">Flavoprotein</keyword>
<keyword id="KW-0560">Oxidoreductase</keyword>
<keyword id="KW-1185">Reference proteome</keyword>
<keyword id="KW-0964">Secreted</keyword>
<accession>A5U3S4</accession>